<name>PNP_BURMA</name>
<sequence>MSLFNKIVKEFQWGQQKVRLETGEIARQASGAVIVDIEDTVVLATVVGAKSAKPGQDFFPLTVDYIEKTYSAGKIPGGFFRREGRPSEHETLTSRLIDRPLRPLFPEGFYNEVQVVIHVLSVNPEIPADIPALIGASAALAVSGLPFNGPVGAARVAYVNNEYVLNPTREQIKASRLDLVVAGTERAVLMVESEADQLPEDVMLGAVVFGHEQMQTAIDAIHELVREGGKPEWDWQPAPKDEALNARVTELAQPELLAAYQIRDKQARLTKLKEVYAATSAKLEEEAVAAGTVAADKATVGNILFDLEAKIVRGQILNGEPRIDGRDTRTVRPIEIRTGVLPRTHGSALFTRGETQALVVATLGTKGDEQIIDALEGEYRERFMLHYNMPPFATGETGRVGSPKRREIGHGRLAKRALVACLPSADEFGYSIRVVSEITESNGSSSMASVCGGCLALMDAGVPMKAHVAGIAMGLILEGNKFAVLTDILGDEDHLGDMDFKVAGTADGVTALQMDIKIQGITKEIMQVALAQAKEGRMHILGKMKDAVAGANTQLSEFAPRMITIKINPEKIRDVIGKGGSVIRALTEETGTTIDISDDGVVTIASTNSEGMAEAKKRIENITAEIEVGHVYEGTVLKLLDFGAIVNLLPGKDGLLHISEIVNERVKDINDYLKEGQQVKVKVIQTDEKGRVRLSAKALLNEAAAQADTPPQQ</sequence>
<protein>
    <recommendedName>
        <fullName evidence="1">Polyribonucleotide nucleotidyltransferase</fullName>
        <ecNumber evidence="1">2.7.7.8</ecNumber>
    </recommendedName>
    <alternativeName>
        <fullName evidence="1">Polynucleotide phosphorylase</fullName>
        <shortName evidence="1">PNPase</shortName>
    </alternativeName>
</protein>
<dbReference type="EC" id="2.7.7.8" evidence="1"/>
<dbReference type="EMBL" id="CP000010">
    <property type="protein sequence ID" value="AAU49845.1"/>
    <property type="molecule type" value="Genomic_DNA"/>
</dbReference>
<dbReference type="RefSeq" id="WP_004186494.1">
    <property type="nucleotide sequence ID" value="NC_006348.1"/>
</dbReference>
<dbReference type="RefSeq" id="YP_103438.1">
    <property type="nucleotide sequence ID" value="NC_006348.1"/>
</dbReference>
<dbReference type="SMR" id="Q62IN1"/>
<dbReference type="GeneID" id="92979547"/>
<dbReference type="KEGG" id="bma:BMA1834"/>
<dbReference type="PATRIC" id="fig|243160.12.peg.1871"/>
<dbReference type="eggNOG" id="COG1185">
    <property type="taxonomic scope" value="Bacteria"/>
</dbReference>
<dbReference type="HOGENOM" id="CLU_004217_2_2_4"/>
<dbReference type="Proteomes" id="UP000006693">
    <property type="component" value="Chromosome 1"/>
</dbReference>
<dbReference type="GO" id="GO:0005829">
    <property type="term" value="C:cytosol"/>
    <property type="evidence" value="ECO:0007669"/>
    <property type="project" value="TreeGrafter"/>
</dbReference>
<dbReference type="GO" id="GO:0000175">
    <property type="term" value="F:3'-5'-RNA exonuclease activity"/>
    <property type="evidence" value="ECO:0007669"/>
    <property type="project" value="TreeGrafter"/>
</dbReference>
<dbReference type="GO" id="GO:0000287">
    <property type="term" value="F:magnesium ion binding"/>
    <property type="evidence" value="ECO:0007669"/>
    <property type="project" value="UniProtKB-UniRule"/>
</dbReference>
<dbReference type="GO" id="GO:0004654">
    <property type="term" value="F:polyribonucleotide nucleotidyltransferase activity"/>
    <property type="evidence" value="ECO:0007669"/>
    <property type="project" value="UniProtKB-UniRule"/>
</dbReference>
<dbReference type="GO" id="GO:0003723">
    <property type="term" value="F:RNA binding"/>
    <property type="evidence" value="ECO:0007669"/>
    <property type="project" value="UniProtKB-UniRule"/>
</dbReference>
<dbReference type="GO" id="GO:0006402">
    <property type="term" value="P:mRNA catabolic process"/>
    <property type="evidence" value="ECO:0007669"/>
    <property type="project" value="UniProtKB-UniRule"/>
</dbReference>
<dbReference type="GO" id="GO:0006396">
    <property type="term" value="P:RNA processing"/>
    <property type="evidence" value="ECO:0007669"/>
    <property type="project" value="InterPro"/>
</dbReference>
<dbReference type="CDD" id="cd02393">
    <property type="entry name" value="KH-I_PNPase"/>
    <property type="match status" value="1"/>
</dbReference>
<dbReference type="CDD" id="cd11363">
    <property type="entry name" value="RNase_PH_PNPase_1"/>
    <property type="match status" value="1"/>
</dbReference>
<dbReference type="CDD" id="cd11364">
    <property type="entry name" value="RNase_PH_PNPase_2"/>
    <property type="match status" value="1"/>
</dbReference>
<dbReference type="CDD" id="cd04472">
    <property type="entry name" value="S1_PNPase"/>
    <property type="match status" value="1"/>
</dbReference>
<dbReference type="FunFam" id="3.30.1370.10:FF:000001">
    <property type="entry name" value="Polyribonucleotide nucleotidyltransferase"/>
    <property type="match status" value="1"/>
</dbReference>
<dbReference type="FunFam" id="3.30.230.70:FF:000001">
    <property type="entry name" value="Polyribonucleotide nucleotidyltransferase"/>
    <property type="match status" value="1"/>
</dbReference>
<dbReference type="FunFam" id="3.30.230.70:FF:000002">
    <property type="entry name" value="Polyribonucleotide nucleotidyltransferase"/>
    <property type="match status" value="1"/>
</dbReference>
<dbReference type="FunFam" id="2.40.50.140:FF:000189">
    <property type="entry name" value="Polyribonucleotide nucleotidyltransferase, putative"/>
    <property type="match status" value="1"/>
</dbReference>
<dbReference type="Gene3D" id="3.30.230.70">
    <property type="entry name" value="GHMP Kinase, N-terminal domain"/>
    <property type="match status" value="2"/>
</dbReference>
<dbReference type="Gene3D" id="3.30.1370.10">
    <property type="entry name" value="K Homology domain, type 1"/>
    <property type="match status" value="1"/>
</dbReference>
<dbReference type="Gene3D" id="2.40.50.140">
    <property type="entry name" value="Nucleic acid-binding proteins"/>
    <property type="match status" value="1"/>
</dbReference>
<dbReference type="HAMAP" id="MF_01595">
    <property type="entry name" value="PNPase"/>
    <property type="match status" value="1"/>
</dbReference>
<dbReference type="InterPro" id="IPR001247">
    <property type="entry name" value="ExoRNase_PH_dom1"/>
</dbReference>
<dbReference type="InterPro" id="IPR015847">
    <property type="entry name" value="ExoRNase_PH_dom2"/>
</dbReference>
<dbReference type="InterPro" id="IPR036345">
    <property type="entry name" value="ExoRNase_PH_dom2_sf"/>
</dbReference>
<dbReference type="InterPro" id="IPR004087">
    <property type="entry name" value="KH_dom"/>
</dbReference>
<dbReference type="InterPro" id="IPR004088">
    <property type="entry name" value="KH_dom_type_1"/>
</dbReference>
<dbReference type="InterPro" id="IPR036612">
    <property type="entry name" value="KH_dom_type_1_sf"/>
</dbReference>
<dbReference type="InterPro" id="IPR012340">
    <property type="entry name" value="NA-bd_OB-fold"/>
</dbReference>
<dbReference type="InterPro" id="IPR012162">
    <property type="entry name" value="PNPase"/>
</dbReference>
<dbReference type="InterPro" id="IPR027408">
    <property type="entry name" value="PNPase/RNase_PH_dom_sf"/>
</dbReference>
<dbReference type="InterPro" id="IPR015848">
    <property type="entry name" value="PNPase_PH_RNA-bd_bac/org-type"/>
</dbReference>
<dbReference type="InterPro" id="IPR036456">
    <property type="entry name" value="PNPase_PH_RNA-bd_sf"/>
</dbReference>
<dbReference type="InterPro" id="IPR020568">
    <property type="entry name" value="Ribosomal_Su5_D2-typ_SF"/>
</dbReference>
<dbReference type="InterPro" id="IPR003029">
    <property type="entry name" value="S1_domain"/>
</dbReference>
<dbReference type="NCBIfam" id="TIGR03591">
    <property type="entry name" value="polynuc_phos"/>
    <property type="match status" value="1"/>
</dbReference>
<dbReference type="NCBIfam" id="NF008805">
    <property type="entry name" value="PRK11824.1"/>
    <property type="match status" value="1"/>
</dbReference>
<dbReference type="PANTHER" id="PTHR11252">
    <property type="entry name" value="POLYRIBONUCLEOTIDE NUCLEOTIDYLTRANSFERASE"/>
    <property type="match status" value="1"/>
</dbReference>
<dbReference type="PANTHER" id="PTHR11252:SF0">
    <property type="entry name" value="POLYRIBONUCLEOTIDE NUCLEOTIDYLTRANSFERASE 1, MITOCHONDRIAL"/>
    <property type="match status" value="1"/>
</dbReference>
<dbReference type="Pfam" id="PF00013">
    <property type="entry name" value="KH_1"/>
    <property type="match status" value="1"/>
</dbReference>
<dbReference type="Pfam" id="PF03726">
    <property type="entry name" value="PNPase"/>
    <property type="match status" value="1"/>
</dbReference>
<dbReference type="Pfam" id="PF01138">
    <property type="entry name" value="RNase_PH"/>
    <property type="match status" value="2"/>
</dbReference>
<dbReference type="Pfam" id="PF03725">
    <property type="entry name" value="RNase_PH_C"/>
    <property type="match status" value="2"/>
</dbReference>
<dbReference type="Pfam" id="PF00575">
    <property type="entry name" value="S1"/>
    <property type="match status" value="1"/>
</dbReference>
<dbReference type="PIRSF" id="PIRSF005499">
    <property type="entry name" value="PNPase"/>
    <property type="match status" value="1"/>
</dbReference>
<dbReference type="SMART" id="SM00322">
    <property type="entry name" value="KH"/>
    <property type="match status" value="1"/>
</dbReference>
<dbReference type="SMART" id="SM00316">
    <property type="entry name" value="S1"/>
    <property type="match status" value="1"/>
</dbReference>
<dbReference type="SUPFAM" id="SSF54791">
    <property type="entry name" value="Eukaryotic type KH-domain (KH-domain type I)"/>
    <property type="match status" value="1"/>
</dbReference>
<dbReference type="SUPFAM" id="SSF50249">
    <property type="entry name" value="Nucleic acid-binding proteins"/>
    <property type="match status" value="1"/>
</dbReference>
<dbReference type="SUPFAM" id="SSF46915">
    <property type="entry name" value="Polynucleotide phosphorylase/guanosine pentaphosphate synthase (PNPase/GPSI), domain 3"/>
    <property type="match status" value="1"/>
</dbReference>
<dbReference type="SUPFAM" id="SSF55666">
    <property type="entry name" value="Ribonuclease PH domain 2-like"/>
    <property type="match status" value="2"/>
</dbReference>
<dbReference type="SUPFAM" id="SSF54211">
    <property type="entry name" value="Ribosomal protein S5 domain 2-like"/>
    <property type="match status" value="2"/>
</dbReference>
<dbReference type="PROSITE" id="PS50084">
    <property type="entry name" value="KH_TYPE_1"/>
    <property type="match status" value="1"/>
</dbReference>
<dbReference type="PROSITE" id="PS50126">
    <property type="entry name" value="S1"/>
    <property type="match status" value="1"/>
</dbReference>
<comment type="function">
    <text evidence="1">Involved in mRNA degradation. Catalyzes the phosphorolysis of single-stranded polyribonucleotides processively in the 3'- to 5'-direction.</text>
</comment>
<comment type="catalytic activity">
    <reaction evidence="1">
        <text>RNA(n+1) + phosphate = RNA(n) + a ribonucleoside 5'-diphosphate</text>
        <dbReference type="Rhea" id="RHEA:22096"/>
        <dbReference type="Rhea" id="RHEA-COMP:14527"/>
        <dbReference type="Rhea" id="RHEA-COMP:17342"/>
        <dbReference type="ChEBI" id="CHEBI:43474"/>
        <dbReference type="ChEBI" id="CHEBI:57930"/>
        <dbReference type="ChEBI" id="CHEBI:140395"/>
        <dbReference type="EC" id="2.7.7.8"/>
    </reaction>
</comment>
<comment type="cofactor">
    <cofactor evidence="1">
        <name>Mg(2+)</name>
        <dbReference type="ChEBI" id="CHEBI:18420"/>
    </cofactor>
</comment>
<comment type="subcellular location">
    <subcellularLocation>
        <location evidence="1">Cytoplasm</location>
    </subcellularLocation>
</comment>
<comment type="similarity">
    <text evidence="1">Belongs to the polyribonucleotide nucleotidyltransferase family.</text>
</comment>
<keyword id="KW-0963">Cytoplasm</keyword>
<keyword id="KW-0460">Magnesium</keyword>
<keyword id="KW-0479">Metal-binding</keyword>
<keyword id="KW-0548">Nucleotidyltransferase</keyword>
<keyword id="KW-1185">Reference proteome</keyword>
<keyword id="KW-0694">RNA-binding</keyword>
<keyword id="KW-0808">Transferase</keyword>
<evidence type="ECO:0000255" key="1">
    <source>
        <dbReference type="HAMAP-Rule" id="MF_01595"/>
    </source>
</evidence>
<feature type="chain" id="PRO_0000329554" description="Polyribonucleotide nucleotidyltransferase">
    <location>
        <begin position="1"/>
        <end position="713"/>
    </location>
</feature>
<feature type="domain" description="KH" evidence="1">
    <location>
        <begin position="560"/>
        <end position="619"/>
    </location>
</feature>
<feature type="domain" description="S1 motif" evidence="1">
    <location>
        <begin position="629"/>
        <end position="697"/>
    </location>
</feature>
<feature type="binding site" evidence="1">
    <location>
        <position position="493"/>
    </location>
    <ligand>
        <name>Mg(2+)</name>
        <dbReference type="ChEBI" id="CHEBI:18420"/>
    </ligand>
</feature>
<feature type="binding site" evidence="1">
    <location>
        <position position="499"/>
    </location>
    <ligand>
        <name>Mg(2+)</name>
        <dbReference type="ChEBI" id="CHEBI:18420"/>
    </ligand>
</feature>
<reference key="1">
    <citation type="journal article" date="2004" name="Proc. Natl. Acad. Sci. U.S.A.">
        <title>Structural flexibility in the Burkholderia mallei genome.</title>
        <authorList>
            <person name="Nierman W.C."/>
            <person name="DeShazer D."/>
            <person name="Kim H.S."/>
            <person name="Tettelin H."/>
            <person name="Nelson K.E."/>
            <person name="Feldblyum T.V."/>
            <person name="Ulrich R.L."/>
            <person name="Ronning C.M."/>
            <person name="Brinkac L.M."/>
            <person name="Daugherty S.C."/>
            <person name="Davidsen T.D."/>
            <person name="DeBoy R.T."/>
            <person name="Dimitrov G."/>
            <person name="Dodson R.J."/>
            <person name="Durkin A.S."/>
            <person name="Gwinn M.L."/>
            <person name="Haft D.H."/>
            <person name="Khouri H.M."/>
            <person name="Kolonay J.F."/>
            <person name="Madupu R."/>
            <person name="Mohammoud Y."/>
            <person name="Nelson W.C."/>
            <person name="Radune D."/>
            <person name="Romero C.M."/>
            <person name="Sarria S."/>
            <person name="Selengut J."/>
            <person name="Shamblin C."/>
            <person name="Sullivan S.A."/>
            <person name="White O."/>
            <person name="Yu Y."/>
            <person name="Zafar N."/>
            <person name="Zhou L."/>
            <person name="Fraser C.M."/>
        </authorList>
    </citation>
    <scope>NUCLEOTIDE SEQUENCE [LARGE SCALE GENOMIC DNA]</scope>
    <source>
        <strain>ATCC 23344</strain>
    </source>
</reference>
<proteinExistence type="inferred from homology"/>
<accession>Q62IN1</accession>
<organism>
    <name type="scientific">Burkholderia mallei (strain ATCC 23344)</name>
    <dbReference type="NCBI Taxonomy" id="243160"/>
    <lineage>
        <taxon>Bacteria</taxon>
        <taxon>Pseudomonadati</taxon>
        <taxon>Pseudomonadota</taxon>
        <taxon>Betaproteobacteria</taxon>
        <taxon>Burkholderiales</taxon>
        <taxon>Burkholderiaceae</taxon>
        <taxon>Burkholderia</taxon>
        <taxon>pseudomallei group</taxon>
    </lineage>
</organism>
<gene>
    <name evidence="1" type="primary">pnp</name>
    <name type="ordered locus">BMA1834</name>
</gene>